<feature type="chain" id="PRO_0000134539" description="Orotidine 5'-phosphate decarboxylase">
    <location>
        <begin position="1"/>
        <end position="245"/>
    </location>
</feature>
<feature type="active site" description="Proton donor">
    <location>
        <position position="73"/>
    </location>
</feature>
<feature type="binding site">
    <location>
        <position position="22"/>
    </location>
    <ligand>
        <name>substrate</name>
    </ligand>
</feature>
<feature type="binding site">
    <location>
        <position position="44"/>
    </location>
    <ligand>
        <name>substrate</name>
    </ligand>
</feature>
<feature type="binding site">
    <location>
        <begin position="71"/>
        <end position="80"/>
    </location>
    <ligand>
        <name>substrate</name>
    </ligand>
</feature>
<feature type="binding site">
    <location>
        <position position="131"/>
    </location>
    <ligand>
        <name>substrate</name>
    </ligand>
</feature>
<feature type="binding site">
    <location>
        <position position="192"/>
    </location>
    <ligand>
        <name>substrate</name>
    </ligand>
</feature>
<feature type="binding site">
    <location>
        <position position="201"/>
    </location>
    <ligand>
        <name>substrate</name>
    </ligand>
</feature>
<feature type="binding site">
    <location>
        <position position="221"/>
    </location>
    <ligand>
        <name>substrate</name>
    </ligand>
</feature>
<feature type="binding site">
    <location>
        <position position="222"/>
    </location>
    <ligand>
        <name>substrate</name>
    </ligand>
</feature>
<feature type="strand" evidence="5">
    <location>
        <begin position="17"/>
        <end position="21"/>
    </location>
</feature>
<feature type="helix" evidence="5">
    <location>
        <begin position="26"/>
        <end position="33"/>
    </location>
</feature>
<feature type="turn" evidence="5">
    <location>
        <begin position="38"/>
        <end position="40"/>
    </location>
</feature>
<feature type="strand" evidence="5">
    <location>
        <begin position="42"/>
        <end position="46"/>
    </location>
</feature>
<feature type="helix" evidence="5">
    <location>
        <begin position="47"/>
        <end position="63"/>
    </location>
</feature>
<feature type="strand" evidence="5">
    <location>
        <begin position="68"/>
        <end position="74"/>
    </location>
</feature>
<feature type="helix" evidence="5">
    <location>
        <begin position="78"/>
        <end position="91"/>
    </location>
</feature>
<feature type="strand" evidence="5">
    <location>
        <begin position="94"/>
        <end position="99"/>
    </location>
</feature>
<feature type="helix" evidence="5">
    <location>
        <begin position="100"/>
        <end position="102"/>
    </location>
</feature>
<feature type="helix" evidence="5">
    <location>
        <begin position="104"/>
        <end position="112"/>
    </location>
</feature>
<feature type="helix" evidence="5">
    <location>
        <begin position="113"/>
        <end position="120"/>
    </location>
</feature>
<feature type="strand" evidence="5">
    <location>
        <begin position="123"/>
        <end position="127"/>
    </location>
</feature>
<feature type="helix" evidence="5">
    <location>
        <begin position="135"/>
        <end position="139"/>
    </location>
</feature>
<feature type="turn" evidence="5">
    <location>
        <begin position="140"/>
        <end position="142"/>
    </location>
</feature>
<feature type="helix" evidence="5">
    <location>
        <begin position="147"/>
        <end position="160"/>
    </location>
</feature>
<feature type="strand" evidence="5">
    <location>
        <begin position="164"/>
        <end position="167"/>
    </location>
</feature>
<feature type="helix" evidence="5">
    <location>
        <begin position="170"/>
        <end position="172"/>
    </location>
</feature>
<feature type="helix" evidence="5">
    <location>
        <begin position="173"/>
        <end position="180"/>
    </location>
</feature>
<feature type="strand" evidence="5">
    <location>
        <begin position="182"/>
        <end position="188"/>
    </location>
</feature>
<feature type="helix" evidence="5">
    <location>
        <begin position="207"/>
        <end position="212"/>
    </location>
</feature>
<feature type="strand" evidence="5">
    <location>
        <begin position="216"/>
        <end position="220"/>
    </location>
</feature>
<feature type="helix" evidence="5">
    <location>
        <begin position="222"/>
        <end position="225"/>
    </location>
</feature>
<feature type="strand" evidence="5">
    <location>
        <begin position="227"/>
        <end position="229"/>
    </location>
</feature>
<feature type="helix" evidence="5">
    <location>
        <begin position="230"/>
        <end position="240"/>
    </location>
</feature>
<name>PYRF_ECOLI</name>
<organism>
    <name type="scientific">Escherichia coli (strain K12)</name>
    <dbReference type="NCBI Taxonomy" id="83333"/>
    <lineage>
        <taxon>Bacteria</taxon>
        <taxon>Pseudomonadati</taxon>
        <taxon>Pseudomonadota</taxon>
        <taxon>Gammaproteobacteria</taxon>
        <taxon>Enterobacterales</taxon>
        <taxon>Enterobacteriaceae</taxon>
        <taxon>Escherichia</taxon>
    </lineage>
</organism>
<evidence type="ECO:0000269" key="1">
    <source>
    </source>
</evidence>
<evidence type="ECO:0000269" key="2">
    <source>
    </source>
</evidence>
<evidence type="ECO:0000269" key="3">
    <source>
    </source>
</evidence>
<evidence type="ECO:0000305" key="4"/>
<evidence type="ECO:0007829" key="5">
    <source>
        <dbReference type="PDB" id="1EIX"/>
    </source>
</evidence>
<reference key="1">
    <citation type="journal article" date="1987" name="J. Biol. Chem.">
        <title>Nucleotide sequence and characterization of the pyrF operon of Escherichia coli K12.</title>
        <authorList>
            <person name="Turnbough C.L. Jr."/>
            <person name="Kerr K.H."/>
            <person name="Funderburg W.R."/>
            <person name="Donahue J.P."/>
            <person name="Powell F.E."/>
        </authorList>
    </citation>
    <scope>NUCLEOTIDE SEQUENCE [GENOMIC DNA]</scope>
    <source>
        <strain>K12</strain>
    </source>
</reference>
<reference key="2">
    <citation type="journal article" date="1996" name="DNA Res.">
        <title>A 570-kb DNA sequence of the Escherichia coli K-12 genome corresponding to the 28.0-40.1 min region on the linkage map.</title>
        <authorList>
            <person name="Aiba H."/>
            <person name="Baba T."/>
            <person name="Fujita K."/>
            <person name="Hayashi K."/>
            <person name="Inada T."/>
            <person name="Isono K."/>
            <person name="Itoh T."/>
            <person name="Kasai H."/>
            <person name="Kashimoto K."/>
            <person name="Kimura S."/>
            <person name="Kitakawa M."/>
            <person name="Kitagawa M."/>
            <person name="Makino K."/>
            <person name="Miki T."/>
            <person name="Mizobuchi K."/>
            <person name="Mori H."/>
            <person name="Mori T."/>
            <person name="Motomura K."/>
            <person name="Nakade S."/>
            <person name="Nakamura Y."/>
            <person name="Nashimoto H."/>
            <person name="Nishio Y."/>
            <person name="Oshima T."/>
            <person name="Saito N."/>
            <person name="Sampei G."/>
            <person name="Seki Y."/>
            <person name="Sivasundaram S."/>
            <person name="Tagami H."/>
            <person name="Takeda J."/>
            <person name="Takemoto K."/>
            <person name="Takeuchi Y."/>
            <person name="Wada C."/>
            <person name="Yamamoto Y."/>
            <person name="Horiuchi T."/>
        </authorList>
    </citation>
    <scope>NUCLEOTIDE SEQUENCE [LARGE SCALE GENOMIC DNA]</scope>
    <source>
        <strain>K12 / W3110 / ATCC 27325 / DSM 5911</strain>
    </source>
</reference>
<reference key="3">
    <citation type="journal article" date="1997" name="Science">
        <title>The complete genome sequence of Escherichia coli K-12.</title>
        <authorList>
            <person name="Blattner F.R."/>
            <person name="Plunkett G. III"/>
            <person name="Bloch C.A."/>
            <person name="Perna N.T."/>
            <person name="Burland V."/>
            <person name="Riley M."/>
            <person name="Collado-Vides J."/>
            <person name="Glasner J.D."/>
            <person name="Rode C.K."/>
            <person name="Mayhew G.F."/>
            <person name="Gregor J."/>
            <person name="Davis N.W."/>
            <person name="Kirkpatrick H.A."/>
            <person name="Goeden M.A."/>
            <person name="Rose D.J."/>
            <person name="Mau B."/>
            <person name="Shao Y."/>
        </authorList>
    </citation>
    <scope>NUCLEOTIDE SEQUENCE [LARGE SCALE GENOMIC DNA]</scope>
    <source>
        <strain>K12 / MG1655 / ATCC 47076</strain>
    </source>
</reference>
<reference key="4">
    <citation type="journal article" date="2006" name="Mol. Syst. Biol.">
        <title>Highly accurate genome sequences of Escherichia coli K-12 strains MG1655 and W3110.</title>
        <authorList>
            <person name="Hayashi K."/>
            <person name="Morooka N."/>
            <person name="Yamamoto Y."/>
            <person name="Fujita K."/>
            <person name="Isono K."/>
            <person name="Choi S."/>
            <person name="Ohtsubo E."/>
            <person name="Baba T."/>
            <person name="Wanner B.L."/>
            <person name="Mori H."/>
            <person name="Horiuchi T."/>
        </authorList>
    </citation>
    <scope>NUCLEOTIDE SEQUENCE [LARGE SCALE GENOMIC DNA]</scope>
    <source>
        <strain>K12 / W3110 / ATCC 27325 / DSM 5911</strain>
    </source>
</reference>
<reference key="5">
    <citation type="journal article" date="1988" name="Cell">
        <title>A consensus sequence of three DNA replication terminus sites on the E. coli chromosome is highly homologous to the terR sites of the R6K plasmid.</title>
        <authorList>
            <person name="Hidaka M."/>
            <person name="Akiyama M."/>
            <person name="Horiuchi T."/>
        </authorList>
    </citation>
    <scope>NUCLEOTIDE SEQUENCE [GENOMIC DNA] OF 1-14</scope>
</reference>
<reference key="6">
    <citation type="journal article" date="2000" name="Biochemistry">
        <title>Structural basis for the catalytic mechanism of a proficient enzyme: orotidine 5'-monophosphate decarboxylase.</title>
        <authorList>
            <person name="Harris P."/>
            <person name="Poulsen J.-C.N."/>
            <person name="Jensen K.F."/>
            <person name="Larsen S."/>
        </authorList>
    </citation>
    <scope>X-RAY CRYSTALLOGRAPHY (2.5 ANGSTROMS) IN COMPLEX WITH SUBSTRATE ANALOG</scope>
    <scope>SUBUNIT</scope>
    <source>
        <strain>K12 / MC4100 / ATCC 35695 / DSM 6574</strain>
    </source>
</reference>
<reference key="7">
    <citation type="journal article" date="2001" name="Acta Crystallogr. D">
        <title>Selenomethionine substitution of orotidine-5'-monophosphate decarboxylase causes a change in crystal contacts and space group.</title>
        <authorList>
            <person name="Poulsen J.-C.N."/>
            <person name="Harris P."/>
            <person name="Jensen K.F."/>
            <person name="Larsen S."/>
        </authorList>
    </citation>
    <scope>X-RAY CRYSTALLOGRAPHY (3.0 ANGSTROMS) IN COMPLEX WITH SUBSTRATE ANALOG</scope>
    <scope>SUBUNIT</scope>
    <source>
        <strain>K12 / MC4100 / ATCC 35695 / DSM 6574</strain>
    </source>
</reference>
<reference key="8">
    <citation type="journal article" date="2002" name="J. Mol. Biol.">
        <title>Substrate binding induces domain movements in orotidine 5'-monophosphate decarboxylase.</title>
        <authorList>
            <person name="Harris P."/>
            <person name="Poulsen J.-C.N."/>
            <person name="Jensen K.F."/>
            <person name="Larsen S."/>
        </authorList>
    </citation>
    <scope>X-RAY CRYSTALLOGRAPHY (2.5 ANGSTROMS) OF THE NATIVE PROTEIN</scope>
    <scope>SUBUNIT</scope>
    <source>
        <strain>K12 / MC4100 / ATCC 35695 / DSM 6574</strain>
    </source>
</reference>
<accession>P08244</accession>
<sequence length="245" mass="26350">MTLTASSSSRAVTNSPVVVALDYHNRDDALAFVDKIDPRDCRLKVGKEMFTLFGPQFVRELQQRGFDIFLDLKFHDIPNTAAHAVAAAADLGVWMVNVHASGGARMMTAAREALVPFGKDAPLLIAVTVLTSMEASDLVDLGMTLSPADYAERLAALTQKCGLDGVVCSAQEAVRFKQVFGQEFKLVTPGIRPQGSEAGDQRRIMTPEQALSAGVDYMVIGRPVTQSVDPAQTLKAINASLQRSA</sequence>
<protein>
    <recommendedName>
        <fullName>Orotidine 5'-phosphate decarboxylase</fullName>
        <ecNumber>4.1.1.23</ecNumber>
    </recommendedName>
    <alternativeName>
        <fullName>OMP decarboxylase</fullName>
        <shortName>OMPDCase</shortName>
        <shortName>OMPdecase</shortName>
    </alternativeName>
</protein>
<proteinExistence type="evidence at protein level"/>
<gene>
    <name type="primary">pyrF</name>
    <name type="ordered locus">b1281</name>
    <name type="ordered locus">JW1273</name>
</gene>
<dbReference type="EC" id="4.1.1.23"/>
<dbReference type="EMBL" id="J02768">
    <property type="protein sequence ID" value="AAA24483.1"/>
    <property type="molecule type" value="Genomic_DNA"/>
</dbReference>
<dbReference type="EMBL" id="U00096">
    <property type="protein sequence ID" value="AAC74363.1"/>
    <property type="molecule type" value="Genomic_DNA"/>
</dbReference>
<dbReference type="EMBL" id="AP009048">
    <property type="protein sequence ID" value="BAA14835.1"/>
    <property type="molecule type" value="Genomic_DNA"/>
</dbReference>
<dbReference type="EMBL" id="M23250">
    <property type="status" value="NOT_ANNOTATED_CDS"/>
    <property type="molecule type" value="Genomic_DNA"/>
</dbReference>
<dbReference type="PIR" id="A28440">
    <property type="entry name" value="DCECOP"/>
</dbReference>
<dbReference type="RefSeq" id="NP_415797.1">
    <property type="nucleotide sequence ID" value="NC_000913.3"/>
</dbReference>
<dbReference type="RefSeq" id="WP_000176270.1">
    <property type="nucleotide sequence ID" value="NZ_SSZK01000012.1"/>
</dbReference>
<dbReference type="PDB" id="1EIX">
    <property type="method" value="X-ray"/>
    <property type="resolution" value="2.50 A"/>
    <property type="chains" value="A/B/C/D=1-245"/>
</dbReference>
<dbReference type="PDB" id="1JJK">
    <property type="method" value="X-ray"/>
    <property type="resolution" value="3.00 A"/>
    <property type="chains" value="A/B/C/D/E/F/G/H/I/J/K/L/M/N/O/P=1-245"/>
</dbReference>
<dbReference type="PDB" id="1L2U">
    <property type="method" value="X-ray"/>
    <property type="resolution" value="2.50 A"/>
    <property type="chains" value="A/B=1-245"/>
</dbReference>
<dbReference type="PDBsum" id="1EIX"/>
<dbReference type="PDBsum" id="1JJK"/>
<dbReference type="PDBsum" id="1L2U"/>
<dbReference type="SMR" id="P08244"/>
<dbReference type="BioGRID" id="4260132">
    <property type="interactions" value="3"/>
</dbReference>
<dbReference type="FunCoup" id="P08244">
    <property type="interactions" value="512"/>
</dbReference>
<dbReference type="IntAct" id="P08244">
    <property type="interactions" value="4"/>
</dbReference>
<dbReference type="STRING" id="511145.b1281"/>
<dbReference type="DrugBank" id="DB02890">
    <property type="generic name" value="6-hydroxyuridine-5'-phosphate"/>
</dbReference>
<dbReference type="DrugBank" id="DB03668">
    <property type="generic name" value="6-oxouridine 5'-phosphate"/>
</dbReference>
<dbReference type="jPOST" id="P08244"/>
<dbReference type="PaxDb" id="511145-b1281"/>
<dbReference type="EnsemblBacteria" id="AAC74363">
    <property type="protein sequence ID" value="AAC74363"/>
    <property type="gene ID" value="b1281"/>
</dbReference>
<dbReference type="GeneID" id="947121"/>
<dbReference type="KEGG" id="ecj:JW1273"/>
<dbReference type="KEGG" id="eco:b1281"/>
<dbReference type="KEGG" id="ecoc:C3026_07520"/>
<dbReference type="PATRIC" id="fig|511145.12.peg.1333"/>
<dbReference type="EchoBASE" id="EB0802"/>
<dbReference type="eggNOG" id="COG0284">
    <property type="taxonomic scope" value="Bacteria"/>
</dbReference>
<dbReference type="HOGENOM" id="CLU_067069_0_0_6"/>
<dbReference type="InParanoid" id="P08244"/>
<dbReference type="OMA" id="FWKVGLE"/>
<dbReference type="OrthoDB" id="9806203at2"/>
<dbReference type="PhylomeDB" id="P08244"/>
<dbReference type="BioCyc" id="EcoCyc:OROTPDECARB-MONOMER"/>
<dbReference type="BioCyc" id="MetaCyc:OROTPDECARB-MONOMER"/>
<dbReference type="SABIO-RK" id="P08244"/>
<dbReference type="UniPathway" id="UPA00070">
    <property type="reaction ID" value="UER00120"/>
</dbReference>
<dbReference type="EvolutionaryTrace" id="P08244"/>
<dbReference type="PRO" id="PR:P08244"/>
<dbReference type="Proteomes" id="UP000000625">
    <property type="component" value="Chromosome"/>
</dbReference>
<dbReference type="GO" id="GO:0005737">
    <property type="term" value="C:cytoplasm"/>
    <property type="evidence" value="ECO:0000314"/>
    <property type="project" value="EcoliWiki"/>
</dbReference>
<dbReference type="GO" id="GO:0005829">
    <property type="term" value="C:cytosol"/>
    <property type="evidence" value="ECO:0000314"/>
    <property type="project" value="EcoCyc"/>
</dbReference>
<dbReference type="GO" id="GO:0016831">
    <property type="term" value="F:carboxy-lyase activity"/>
    <property type="evidence" value="ECO:0000314"/>
    <property type="project" value="EcoliWiki"/>
</dbReference>
<dbReference type="GO" id="GO:0004590">
    <property type="term" value="F:orotidine-5'-phosphate decarboxylase activity"/>
    <property type="evidence" value="ECO:0000314"/>
    <property type="project" value="EcoCyc"/>
</dbReference>
<dbReference type="GO" id="GO:0006207">
    <property type="term" value="P:'de novo' pyrimidine nucleobase biosynthetic process"/>
    <property type="evidence" value="ECO:0000315"/>
    <property type="project" value="EcoCyc"/>
</dbReference>
<dbReference type="GO" id="GO:0044205">
    <property type="term" value="P:'de novo' UMP biosynthetic process"/>
    <property type="evidence" value="ECO:0007669"/>
    <property type="project" value="UniProtKB-UniRule"/>
</dbReference>
<dbReference type="GO" id="GO:0015949">
    <property type="term" value="P:nucleobase-containing small molecule interconversion"/>
    <property type="evidence" value="ECO:0000314"/>
    <property type="project" value="EcoliWiki"/>
</dbReference>
<dbReference type="CDD" id="cd04725">
    <property type="entry name" value="OMP_decarboxylase_like"/>
    <property type="match status" value="1"/>
</dbReference>
<dbReference type="FunFam" id="3.20.20.70:FF:000015">
    <property type="entry name" value="Orotidine 5'-phosphate decarboxylase"/>
    <property type="match status" value="1"/>
</dbReference>
<dbReference type="Gene3D" id="3.20.20.70">
    <property type="entry name" value="Aldolase class I"/>
    <property type="match status" value="1"/>
</dbReference>
<dbReference type="HAMAP" id="MF_01200_B">
    <property type="entry name" value="OMPdecase_type1_B"/>
    <property type="match status" value="1"/>
</dbReference>
<dbReference type="InterPro" id="IPR013785">
    <property type="entry name" value="Aldolase_TIM"/>
</dbReference>
<dbReference type="InterPro" id="IPR014732">
    <property type="entry name" value="OMPdecase"/>
</dbReference>
<dbReference type="InterPro" id="IPR018089">
    <property type="entry name" value="OMPdecase_AS"/>
</dbReference>
<dbReference type="InterPro" id="IPR047596">
    <property type="entry name" value="OMPdecase_bac"/>
</dbReference>
<dbReference type="InterPro" id="IPR001754">
    <property type="entry name" value="OMPdeCOase_dom"/>
</dbReference>
<dbReference type="InterPro" id="IPR011060">
    <property type="entry name" value="RibuloseP-bd_barrel"/>
</dbReference>
<dbReference type="NCBIfam" id="NF001273">
    <property type="entry name" value="PRK00230.1"/>
    <property type="match status" value="1"/>
</dbReference>
<dbReference type="NCBIfam" id="TIGR01740">
    <property type="entry name" value="pyrF"/>
    <property type="match status" value="1"/>
</dbReference>
<dbReference type="PANTHER" id="PTHR32119">
    <property type="entry name" value="OROTIDINE 5'-PHOSPHATE DECARBOXYLASE"/>
    <property type="match status" value="1"/>
</dbReference>
<dbReference type="PANTHER" id="PTHR32119:SF2">
    <property type="entry name" value="OROTIDINE 5'-PHOSPHATE DECARBOXYLASE"/>
    <property type="match status" value="1"/>
</dbReference>
<dbReference type="Pfam" id="PF00215">
    <property type="entry name" value="OMPdecase"/>
    <property type="match status" value="1"/>
</dbReference>
<dbReference type="SMART" id="SM00934">
    <property type="entry name" value="OMPdecase"/>
    <property type="match status" value="1"/>
</dbReference>
<dbReference type="SUPFAM" id="SSF51366">
    <property type="entry name" value="Ribulose-phoshate binding barrel"/>
    <property type="match status" value="1"/>
</dbReference>
<dbReference type="PROSITE" id="PS00156">
    <property type="entry name" value="OMPDECASE"/>
    <property type="match status" value="1"/>
</dbReference>
<comment type="function">
    <text>Catalyzes the decarboxylation of orotidine 5'-monophosphate (OMP) to uridine 5'-monophosphate (UMP).</text>
</comment>
<comment type="catalytic activity">
    <reaction>
        <text>orotidine 5'-phosphate + H(+) = UMP + CO2</text>
        <dbReference type="Rhea" id="RHEA:11596"/>
        <dbReference type="ChEBI" id="CHEBI:15378"/>
        <dbReference type="ChEBI" id="CHEBI:16526"/>
        <dbReference type="ChEBI" id="CHEBI:57538"/>
        <dbReference type="ChEBI" id="CHEBI:57865"/>
        <dbReference type="EC" id="4.1.1.23"/>
    </reaction>
</comment>
<comment type="pathway">
    <text>Pyrimidine metabolism; UMP biosynthesis via de novo pathway; UMP from orotate: step 2/2.</text>
</comment>
<comment type="subunit">
    <text evidence="1 2 3">Homodimer.</text>
</comment>
<comment type="interaction">
    <interactant intactId="EBI-1123202">
        <id>P08244</id>
    </interactant>
    <interactant intactId="EBI-1123314">
        <id>P0A7I7</id>
        <label>ribA</label>
    </interactant>
    <organismsDiffer>false</organismsDiffer>
    <experiments>2</experiments>
</comment>
<comment type="similarity">
    <text evidence="4">Belongs to the OMP decarboxylase family. Type 1 subfamily.</text>
</comment>
<keyword id="KW-0002">3D-structure</keyword>
<keyword id="KW-0210">Decarboxylase</keyword>
<keyword id="KW-0456">Lyase</keyword>
<keyword id="KW-0665">Pyrimidine biosynthesis</keyword>
<keyword id="KW-1185">Reference proteome</keyword>